<dbReference type="EC" id="6.1.1.20" evidence="1"/>
<dbReference type="EMBL" id="CU928160">
    <property type="protein sequence ID" value="CAQ98627.1"/>
    <property type="molecule type" value="Genomic_DNA"/>
</dbReference>
<dbReference type="RefSeq" id="WP_000018596.1">
    <property type="nucleotide sequence ID" value="NC_011741.1"/>
</dbReference>
<dbReference type="SMR" id="B7M1C3"/>
<dbReference type="GeneID" id="75205640"/>
<dbReference type="KEGG" id="ecr:ECIAI1_1770"/>
<dbReference type="HOGENOM" id="CLU_025086_0_1_6"/>
<dbReference type="GO" id="GO:0005737">
    <property type="term" value="C:cytoplasm"/>
    <property type="evidence" value="ECO:0007669"/>
    <property type="project" value="UniProtKB-SubCell"/>
</dbReference>
<dbReference type="GO" id="GO:0005524">
    <property type="term" value="F:ATP binding"/>
    <property type="evidence" value="ECO:0007669"/>
    <property type="project" value="UniProtKB-UniRule"/>
</dbReference>
<dbReference type="GO" id="GO:0000287">
    <property type="term" value="F:magnesium ion binding"/>
    <property type="evidence" value="ECO:0007669"/>
    <property type="project" value="UniProtKB-UniRule"/>
</dbReference>
<dbReference type="GO" id="GO:0004826">
    <property type="term" value="F:phenylalanine-tRNA ligase activity"/>
    <property type="evidence" value="ECO:0007669"/>
    <property type="project" value="UniProtKB-UniRule"/>
</dbReference>
<dbReference type="GO" id="GO:0000049">
    <property type="term" value="F:tRNA binding"/>
    <property type="evidence" value="ECO:0007669"/>
    <property type="project" value="InterPro"/>
</dbReference>
<dbReference type="GO" id="GO:0006432">
    <property type="term" value="P:phenylalanyl-tRNA aminoacylation"/>
    <property type="evidence" value="ECO:0007669"/>
    <property type="project" value="UniProtKB-UniRule"/>
</dbReference>
<dbReference type="CDD" id="cd00496">
    <property type="entry name" value="PheRS_alpha_core"/>
    <property type="match status" value="1"/>
</dbReference>
<dbReference type="FunFam" id="3.30.930.10:FF:000003">
    <property type="entry name" value="Phenylalanine--tRNA ligase alpha subunit"/>
    <property type="match status" value="1"/>
</dbReference>
<dbReference type="Gene3D" id="3.30.930.10">
    <property type="entry name" value="Bira Bifunctional Protein, Domain 2"/>
    <property type="match status" value="1"/>
</dbReference>
<dbReference type="HAMAP" id="MF_00281">
    <property type="entry name" value="Phe_tRNA_synth_alpha1"/>
    <property type="match status" value="1"/>
</dbReference>
<dbReference type="InterPro" id="IPR006195">
    <property type="entry name" value="aa-tRNA-synth_II"/>
</dbReference>
<dbReference type="InterPro" id="IPR045864">
    <property type="entry name" value="aa-tRNA-synth_II/BPL/LPL"/>
</dbReference>
<dbReference type="InterPro" id="IPR004529">
    <property type="entry name" value="Phe-tRNA-synth_IIc_asu"/>
</dbReference>
<dbReference type="InterPro" id="IPR004188">
    <property type="entry name" value="Phe-tRNA_ligase_II_N"/>
</dbReference>
<dbReference type="InterPro" id="IPR022911">
    <property type="entry name" value="Phe_tRNA_ligase_alpha1_bac"/>
</dbReference>
<dbReference type="InterPro" id="IPR002319">
    <property type="entry name" value="Phenylalanyl-tRNA_Synthase"/>
</dbReference>
<dbReference type="InterPro" id="IPR010978">
    <property type="entry name" value="tRNA-bd_arm"/>
</dbReference>
<dbReference type="NCBIfam" id="TIGR00468">
    <property type="entry name" value="pheS"/>
    <property type="match status" value="1"/>
</dbReference>
<dbReference type="PANTHER" id="PTHR11538:SF41">
    <property type="entry name" value="PHENYLALANINE--TRNA LIGASE, MITOCHONDRIAL"/>
    <property type="match status" value="1"/>
</dbReference>
<dbReference type="PANTHER" id="PTHR11538">
    <property type="entry name" value="PHENYLALANYL-TRNA SYNTHETASE"/>
    <property type="match status" value="1"/>
</dbReference>
<dbReference type="Pfam" id="PF02912">
    <property type="entry name" value="Phe_tRNA-synt_N"/>
    <property type="match status" value="1"/>
</dbReference>
<dbReference type="Pfam" id="PF01409">
    <property type="entry name" value="tRNA-synt_2d"/>
    <property type="match status" value="1"/>
</dbReference>
<dbReference type="SUPFAM" id="SSF55681">
    <property type="entry name" value="Class II aaRS and biotin synthetases"/>
    <property type="match status" value="1"/>
</dbReference>
<dbReference type="SUPFAM" id="SSF46589">
    <property type="entry name" value="tRNA-binding arm"/>
    <property type="match status" value="1"/>
</dbReference>
<dbReference type="PROSITE" id="PS50862">
    <property type="entry name" value="AA_TRNA_LIGASE_II"/>
    <property type="match status" value="1"/>
</dbReference>
<keyword id="KW-0030">Aminoacyl-tRNA synthetase</keyword>
<keyword id="KW-0067">ATP-binding</keyword>
<keyword id="KW-0963">Cytoplasm</keyword>
<keyword id="KW-0436">Ligase</keyword>
<keyword id="KW-0460">Magnesium</keyword>
<keyword id="KW-0479">Metal-binding</keyword>
<keyword id="KW-0547">Nucleotide-binding</keyword>
<keyword id="KW-0648">Protein biosynthesis</keyword>
<proteinExistence type="inferred from homology"/>
<feature type="chain" id="PRO_1000119395" description="Phenylalanine--tRNA ligase alpha subunit">
    <location>
        <begin position="1"/>
        <end position="327"/>
    </location>
</feature>
<feature type="binding site" evidence="1">
    <location>
        <position position="252"/>
    </location>
    <ligand>
        <name>Mg(2+)</name>
        <dbReference type="ChEBI" id="CHEBI:18420"/>
        <note>shared with beta subunit</note>
    </ligand>
</feature>
<accession>B7M1C3</accession>
<sequence length="327" mass="36832">MSHLAELVASAKAAISQASDVAALDNVRVEYLGKKGHLTLQMTTLRELPPEERPAAGAVINEAKEQVQQALNARKAELESAALNARLAAETIDVSLPGRRIENGGLHPVTRTIDRIESFFGELGFTVATGPEIEDDYHNFDALNIPGHHPARADHDTFWFDTTRLLRTQTSGVQIRTMKAQQPPIRIIAPGRVYRNDYDQTHTPMFHQMEGLIVDTNISFTNLKGTLHDFLRNFFEEDLQIRFRPSYFPFTEPSAEVDVMGKNGKWLEVLGCGMVHPNVLRNVGIDPEVYSGFAFGMGMERLTMLRYGVTDLRSFFENDLRFLKQFK</sequence>
<organism>
    <name type="scientific">Escherichia coli O8 (strain IAI1)</name>
    <dbReference type="NCBI Taxonomy" id="585034"/>
    <lineage>
        <taxon>Bacteria</taxon>
        <taxon>Pseudomonadati</taxon>
        <taxon>Pseudomonadota</taxon>
        <taxon>Gammaproteobacteria</taxon>
        <taxon>Enterobacterales</taxon>
        <taxon>Enterobacteriaceae</taxon>
        <taxon>Escherichia</taxon>
    </lineage>
</organism>
<evidence type="ECO:0000255" key="1">
    <source>
        <dbReference type="HAMAP-Rule" id="MF_00281"/>
    </source>
</evidence>
<gene>
    <name evidence="1" type="primary">pheS</name>
    <name type="ordered locus">ECIAI1_1770</name>
</gene>
<reference key="1">
    <citation type="journal article" date="2009" name="PLoS Genet.">
        <title>Organised genome dynamics in the Escherichia coli species results in highly diverse adaptive paths.</title>
        <authorList>
            <person name="Touchon M."/>
            <person name="Hoede C."/>
            <person name="Tenaillon O."/>
            <person name="Barbe V."/>
            <person name="Baeriswyl S."/>
            <person name="Bidet P."/>
            <person name="Bingen E."/>
            <person name="Bonacorsi S."/>
            <person name="Bouchier C."/>
            <person name="Bouvet O."/>
            <person name="Calteau A."/>
            <person name="Chiapello H."/>
            <person name="Clermont O."/>
            <person name="Cruveiller S."/>
            <person name="Danchin A."/>
            <person name="Diard M."/>
            <person name="Dossat C."/>
            <person name="Karoui M.E."/>
            <person name="Frapy E."/>
            <person name="Garry L."/>
            <person name="Ghigo J.M."/>
            <person name="Gilles A.M."/>
            <person name="Johnson J."/>
            <person name="Le Bouguenec C."/>
            <person name="Lescat M."/>
            <person name="Mangenot S."/>
            <person name="Martinez-Jehanne V."/>
            <person name="Matic I."/>
            <person name="Nassif X."/>
            <person name="Oztas S."/>
            <person name="Petit M.A."/>
            <person name="Pichon C."/>
            <person name="Rouy Z."/>
            <person name="Ruf C.S."/>
            <person name="Schneider D."/>
            <person name="Tourret J."/>
            <person name="Vacherie B."/>
            <person name="Vallenet D."/>
            <person name="Medigue C."/>
            <person name="Rocha E.P.C."/>
            <person name="Denamur E."/>
        </authorList>
    </citation>
    <scope>NUCLEOTIDE SEQUENCE [LARGE SCALE GENOMIC DNA]</scope>
    <source>
        <strain>IAI1</strain>
    </source>
</reference>
<name>SYFA_ECO8A</name>
<protein>
    <recommendedName>
        <fullName evidence="1">Phenylalanine--tRNA ligase alpha subunit</fullName>
        <ecNumber evidence="1">6.1.1.20</ecNumber>
    </recommendedName>
    <alternativeName>
        <fullName evidence="1">Phenylalanyl-tRNA synthetase alpha subunit</fullName>
        <shortName evidence="1">PheRS</shortName>
    </alternativeName>
</protein>
<comment type="catalytic activity">
    <reaction evidence="1">
        <text>tRNA(Phe) + L-phenylalanine + ATP = L-phenylalanyl-tRNA(Phe) + AMP + diphosphate + H(+)</text>
        <dbReference type="Rhea" id="RHEA:19413"/>
        <dbReference type="Rhea" id="RHEA-COMP:9668"/>
        <dbReference type="Rhea" id="RHEA-COMP:9699"/>
        <dbReference type="ChEBI" id="CHEBI:15378"/>
        <dbReference type="ChEBI" id="CHEBI:30616"/>
        <dbReference type="ChEBI" id="CHEBI:33019"/>
        <dbReference type="ChEBI" id="CHEBI:58095"/>
        <dbReference type="ChEBI" id="CHEBI:78442"/>
        <dbReference type="ChEBI" id="CHEBI:78531"/>
        <dbReference type="ChEBI" id="CHEBI:456215"/>
        <dbReference type="EC" id="6.1.1.20"/>
    </reaction>
</comment>
<comment type="cofactor">
    <cofactor evidence="1">
        <name>Mg(2+)</name>
        <dbReference type="ChEBI" id="CHEBI:18420"/>
    </cofactor>
    <text evidence="1">Binds 2 magnesium ions per tetramer.</text>
</comment>
<comment type="subunit">
    <text evidence="1">Tetramer of two alpha and two beta subunits.</text>
</comment>
<comment type="subcellular location">
    <subcellularLocation>
        <location evidence="1">Cytoplasm</location>
    </subcellularLocation>
</comment>
<comment type="similarity">
    <text evidence="1">Belongs to the class-II aminoacyl-tRNA synthetase family. Phe-tRNA synthetase alpha subunit type 1 subfamily.</text>
</comment>